<comment type="function">
    <text evidence="2">May be involved in the regulation of p53-dependent G2 arrest of the cell cycle. Seems to induce cell cycle arrest by inhibiting CDK1 activity and nuclear translocation of the CDC2 cyclin B1 complex.</text>
</comment>
<comment type="subcellular location">
    <subcellularLocation>
        <location evidence="2">Cytoplasm</location>
    </subcellularLocation>
    <subcellularLocation>
        <location evidence="3">Membrane</location>
        <topology evidence="3">Single-pass membrane protein</topology>
    </subcellularLocation>
</comment>
<comment type="induction">
    <text evidence="2">By p53/TP53, following X-ray irradiation.</text>
</comment>
<comment type="miscellaneous">
    <text>'Reprimo' signifies stop/repress.</text>
</comment>
<comment type="similarity">
    <text evidence="3">Belongs to the reprimo family.</text>
</comment>
<accession>Q9JJ72</accession>
<accession>Q8K1G8</accession>
<organism>
    <name type="scientific">Mus musculus</name>
    <name type="common">Mouse</name>
    <dbReference type="NCBI Taxonomy" id="10090"/>
    <lineage>
        <taxon>Eukaryota</taxon>
        <taxon>Metazoa</taxon>
        <taxon>Chordata</taxon>
        <taxon>Craniata</taxon>
        <taxon>Vertebrata</taxon>
        <taxon>Euteleostomi</taxon>
        <taxon>Mammalia</taxon>
        <taxon>Eutheria</taxon>
        <taxon>Euarchontoglires</taxon>
        <taxon>Glires</taxon>
        <taxon>Rodentia</taxon>
        <taxon>Myomorpha</taxon>
        <taxon>Muroidea</taxon>
        <taxon>Muridae</taxon>
        <taxon>Murinae</taxon>
        <taxon>Mus</taxon>
        <taxon>Mus</taxon>
    </lineage>
</organism>
<protein>
    <recommendedName>
        <fullName>Protein reprimo</fullName>
    </recommendedName>
</protein>
<reference key="1">
    <citation type="journal article" date="2000" name="J. Biol. Chem.">
        <title>Reprimo, a new candidate mediator of the p53-mediated cell cycle arrest at the G2 phase.</title>
        <authorList>
            <person name="Ohki R."/>
            <person name="Nemoto J."/>
            <person name="Murasawa H."/>
            <person name="Oda E."/>
            <person name="Inazawa J."/>
            <person name="Tanaka N."/>
            <person name="Taniguchi T."/>
        </authorList>
    </citation>
    <scope>NUCLEOTIDE SEQUENCE [MRNA]</scope>
    <scope>FUNCTION</scope>
    <scope>SUBCELLULAR LOCATION</scope>
    <scope>INDUCTION</scope>
    <scope>GLYCOSYLATION AT ASN-7 AND ASN-18</scope>
</reference>
<reference key="2">
    <citation type="journal article" date="2005" name="Science">
        <title>The transcriptional landscape of the mammalian genome.</title>
        <authorList>
            <person name="Carninci P."/>
            <person name="Kasukawa T."/>
            <person name="Katayama S."/>
            <person name="Gough J."/>
            <person name="Frith M.C."/>
            <person name="Maeda N."/>
            <person name="Oyama R."/>
            <person name="Ravasi T."/>
            <person name="Lenhard B."/>
            <person name="Wells C."/>
            <person name="Kodzius R."/>
            <person name="Shimokawa K."/>
            <person name="Bajic V.B."/>
            <person name="Brenner S.E."/>
            <person name="Batalov S."/>
            <person name="Forrest A.R."/>
            <person name="Zavolan M."/>
            <person name="Davis M.J."/>
            <person name="Wilming L.G."/>
            <person name="Aidinis V."/>
            <person name="Allen J.E."/>
            <person name="Ambesi-Impiombato A."/>
            <person name="Apweiler R."/>
            <person name="Aturaliya R.N."/>
            <person name="Bailey T.L."/>
            <person name="Bansal M."/>
            <person name="Baxter L."/>
            <person name="Beisel K.W."/>
            <person name="Bersano T."/>
            <person name="Bono H."/>
            <person name="Chalk A.M."/>
            <person name="Chiu K.P."/>
            <person name="Choudhary V."/>
            <person name="Christoffels A."/>
            <person name="Clutterbuck D.R."/>
            <person name="Crowe M.L."/>
            <person name="Dalla E."/>
            <person name="Dalrymple B.P."/>
            <person name="de Bono B."/>
            <person name="Della Gatta G."/>
            <person name="di Bernardo D."/>
            <person name="Down T."/>
            <person name="Engstrom P."/>
            <person name="Fagiolini M."/>
            <person name="Faulkner G."/>
            <person name="Fletcher C.F."/>
            <person name="Fukushima T."/>
            <person name="Furuno M."/>
            <person name="Futaki S."/>
            <person name="Gariboldi M."/>
            <person name="Georgii-Hemming P."/>
            <person name="Gingeras T.R."/>
            <person name="Gojobori T."/>
            <person name="Green R.E."/>
            <person name="Gustincich S."/>
            <person name="Harbers M."/>
            <person name="Hayashi Y."/>
            <person name="Hensch T.K."/>
            <person name="Hirokawa N."/>
            <person name="Hill D."/>
            <person name="Huminiecki L."/>
            <person name="Iacono M."/>
            <person name="Ikeo K."/>
            <person name="Iwama A."/>
            <person name="Ishikawa T."/>
            <person name="Jakt M."/>
            <person name="Kanapin A."/>
            <person name="Katoh M."/>
            <person name="Kawasawa Y."/>
            <person name="Kelso J."/>
            <person name="Kitamura H."/>
            <person name="Kitano H."/>
            <person name="Kollias G."/>
            <person name="Krishnan S.P."/>
            <person name="Kruger A."/>
            <person name="Kummerfeld S.K."/>
            <person name="Kurochkin I.V."/>
            <person name="Lareau L.F."/>
            <person name="Lazarevic D."/>
            <person name="Lipovich L."/>
            <person name="Liu J."/>
            <person name="Liuni S."/>
            <person name="McWilliam S."/>
            <person name="Madan Babu M."/>
            <person name="Madera M."/>
            <person name="Marchionni L."/>
            <person name="Matsuda H."/>
            <person name="Matsuzawa S."/>
            <person name="Miki H."/>
            <person name="Mignone F."/>
            <person name="Miyake S."/>
            <person name="Morris K."/>
            <person name="Mottagui-Tabar S."/>
            <person name="Mulder N."/>
            <person name="Nakano N."/>
            <person name="Nakauchi H."/>
            <person name="Ng P."/>
            <person name="Nilsson R."/>
            <person name="Nishiguchi S."/>
            <person name="Nishikawa S."/>
            <person name="Nori F."/>
            <person name="Ohara O."/>
            <person name="Okazaki Y."/>
            <person name="Orlando V."/>
            <person name="Pang K.C."/>
            <person name="Pavan W.J."/>
            <person name="Pavesi G."/>
            <person name="Pesole G."/>
            <person name="Petrovsky N."/>
            <person name="Piazza S."/>
            <person name="Reed J."/>
            <person name="Reid J.F."/>
            <person name="Ring B.Z."/>
            <person name="Ringwald M."/>
            <person name="Rost B."/>
            <person name="Ruan Y."/>
            <person name="Salzberg S.L."/>
            <person name="Sandelin A."/>
            <person name="Schneider C."/>
            <person name="Schoenbach C."/>
            <person name="Sekiguchi K."/>
            <person name="Semple C.A."/>
            <person name="Seno S."/>
            <person name="Sessa L."/>
            <person name="Sheng Y."/>
            <person name="Shibata Y."/>
            <person name="Shimada H."/>
            <person name="Shimada K."/>
            <person name="Silva D."/>
            <person name="Sinclair B."/>
            <person name="Sperling S."/>
            <person name="Stupka E."/>
            <person name="Sugiura K."/>
            <person name="Sultana R."/>
            <person name="Takenaka Y."/>
            <person name="Taki K."/>
            <person name="Tammoja K."/>
            <person name="Tan S.L."/>
            <person name="Tang S."/>
            <person name="Taylor M.S."/>
            <person name="Tegner J."/>
            <person name="Teichmann S.A."/>
            <person name="Ueda H.R."/>
            <person name="van Nimwegen E."/>
            <person name="Verardo R."/>
            <person name="Wei C.L."/>
            <person name="Yagi K."/>
            <person name="Yamanishi H."/>
            <person name="Zabarovsky E."/>
            <person name="Zhu S."/>
            <person name="Zimmer A."/>
            <person name="Hide W."/>
            <person name="Bult C."/>
            <person name="Grimmond S.M."/>
            <person name="Teasdale R.D."/>
            <person name="Liu E.T."/>
            <person name="Brusic V."/>
            <person name="Quackenbush J."/>
            <person name="Wahlestedt C."/>
            <person name="Mattick J.S."/>
            <person name="Hume D.A."/>
            <person name="Kai C."/>
            <person name="Sasaki D."/>
            <person name="Tomaru Y."/>
            <person name="Fukuda S."/>
            <person name="Kanamori-Katayama M."/>
            <person name="Suzuki M."/>
            <person name="Aoki J."/>
            <person name="Arakawa T."/>
            <person name="Iida J."/>
            <person name="Imamura K."/>
            <person name="Itoh M."/>
            <person name="Kato T."/>
            <person name="Kawaji H."/>
            <person name="Kawagashira N."/>
            <person name="Kawashima T."/>
            <person name="Kojima M."/>
            <person name="Kondo S."/>
            <person name="Konno H."/>
            <person name="Nakano K."/>
            <person name="Ninomiya N."/>
            <person name="Nishio T."/>
            <person name="Okada M."/>
            <person name="Plessy C."/>
            <person name="Shibata K."/>
            <person name="Shiraki T."/>
            <person name="Suzuki S."/>
            <person name="Tagami M."/>
            <person name="Waki K."/>
            <person name="Watahiki A."/>
            <person name="Okamura-Oho Y."/>
            <person name="Suzuki H."/>
            <person name="Kawai J."/>
            <person name="Hayashizaki Y."/>
        </authorList>
    </citation>
    <scope>NUCLEOTIDE SEQUENCE [LARGE SCALE MRNA]</scope>
    <source>
        <strain>C57BL/6J</strain>
        <tissue>Embryonic stem cell</tissue>
        <tissue>Head</tissue>
    </source>
</reference>
<reference key="3">
    <citation type="journal article" date="2009" name="PLoS Biol.">
        <title>Lineage-specific biology revealed by a finished genome assembly of the mouse.</title>
        <authorList>
            <person name="Church D.M."/>
            <person name="Goodstadt L."/>
            <person name="Hillier L.W."/>
            <person name="Zody M.C."/>
            <person name="Goldstein S."/>
            <person name="She X."/>
            <person name="Bult C.J."/>
            <person name="Agarwala R."/>
            <person name="Cherry J.L."/>
            <person name="DiCuccio M."/>
            <person name="Hlavina W."/>
            <person name="Kapustin Y."/>
            <person name="Meric P."/>
            <person name="Maglott D."/>
            <person name="Birtle Z."/>
            <person name="Marques A.C."/>
            <person name="Graves T."/>
            <person name="Zhou S."/>
            <person name="Teague B."/>
            <person name="Potamousis K."/>
            <person name="Churas C."/>
            <person name="Place M."/>
            <person name="Herschleb J."/>
            <person name="Runnheim R."/>
            <person name="Forrest D."/>
            <person name="Amos-Landgraf J."/>
            <person name="Schwartz D.C."/>
            <person name="Cheng Z."/>
            <person name="Lindblad-Toh K."/>
            <person name="Eichler E.E."/>
            <person name="Ponting C.P."/>
        </authorList>
    </citation>
    <scope>NUCLEOTIDE SEQUENCE [LARGE SCALE GENOMIC DNA]</scope>
    <source>
        <strain>C57BL/6J</strain>
    </source>
</reference>
<reference key="4">
    <citation type="journal article" date="2004" name="Genome Res.">
        <title>The status, quality, and expansion of the NIH full-length cDNA project: the Mammalian Gene Collection (MGC).</title>
        <authorList>
            <consortium name="The MGC Project Team"/>
        </authorList>
    </citation>
    <scope>NUCLEOTIDE SEQUENCE [LARGE SCALE MRNA]</scope>
    <source>
        <tissue>Uterus</tissue>
    </source>
</reference>
<reference key="5">
    <citation type="journal article" date="2010" name="Cell">
        <title>A tissue-specific atlas of mouse protein phosphorylation and expression.</title>
        <authorList>
            <person name="Huttlin E.L."/>
            <person name="Jedrychowski M.P."/>
            <person name="Elias J.E."/>
            <person name="Goswami T."/>
            <person name="Rad R."/>
            <person name="Beausoleil S.A."/>
            <person name="Villen J."/>
            <person name="Haas W."/>
            <person name="Sowa M.E."/>
            <person name="Gygi S.P."/>
        </authorList>
    </citation>
    <scope>PHOSPHORYLATION [LARGE SCALE ANALYSIS] AT SER-98</scope>
    <scope>IDENTIFICATION BY MASS SPECTROMETRY [LARGE SCALE ANALYSIS]</scope>
    <source>
        <tissue>Brain</tissue>
    </source>
</reference>
<evidence type="ECO:0000255" key="1"/>
<evidence type="ECO:0000269" key="2">
    <source>
    </source>
</evidence>
<evidence type="ECO:0000305" key="3"/>
<evidence type="ECO:0007744" key="4">
    <source>
    </source>
</evidence>
<gene>
    <name type="primary">Rprm</name>
</gene>
<feature type="chain" id="PRO_0000312753" description="Protein reprimo">
    <location>
        <begin position="1"/>
        <end position="109"/>
    </location>
</feature>
<feature type="transmembrane region" description="Helical" evidence="1">
    <location>
        <begin position="56"/>
        <end position="76"/>
    </location>
</feature>
<feature type="modified residue" description="Phosphoserine" evidence="4">
    <location>
        <position position="98"/>
    </location>
</feature>
<feature type="glycosylation site" description="N-linked (GlcNAc...) asparagine" evidence="2">
    <location>
        <position position="7"/>
    </location>
</feature>
<feature type="glycosylation site" description="N-linked (GlcNAc...) asparagine" evidence="2">
    <location>
        <position position="18"/>
    </location>
</feature>
<feature type="sequence conflict" description="In Ref. 4; AAH30065." evidence="3" ref="4">
    <original>V</original>
    <variation>A</variation>
    <location>
        <position position="17"/>
    </location>
</feature>
<sequence>MNSVLGNQTDVAGLFLVNSSEALERAVRCCTQASVVTDDGFAEGGPDERSLYIMRVVQIAVMCVLSLTVVFGIFFLGCNLLIKSEGMINFLVKDRRPSKEVEAVVVGPY</sequence>
<proteinExistence type="evidence at protein level"/>
<dbReference type="EMBL" id="AB043586">
    <property type="protein sequence ID" value="BAB01514.1"/>
    <property type="molecule type" value="mRNA"/>
</dbReference>
<dbReference type="EMBL" id="AK010465">
    <property type="protein sequence ID" value="BAB26960.1"/>
    <property type="molecule type" value="mRNA"/>
</dbReference>
<dbReference type="EMBL" id="AK014769">
    <property type="protein sequence ID" value="BAB29541.1"/>
    <property type="molecule type" value="mRNA"/>
</dbReference>
<dbReference type="EMBL" id="AL844850">
    <property type="status" value="NOT_ANNOTATED_CDS"/>
    <property type="molecule type" value="Genomic_DNA"/>
</dbReference>
<dbReference type="EMBL" id="BC030065">
    <property type="protein sequence ID" value="AAH30065.1"/>
    <property type="molecule type" value="mRNA"/>
</dbReference>
<dbReference type="CCDS" id="CCDS16040.1"/>
<dbReference type="RefSeq" id="NP_075885.1">
    <property type="nucleotide sequence ID" value="NM_023396.5"/>
</dbReference>
<dbReference type="FunCoup" id="Q9JJ72">
    <property type="interactions" value="544"/>
</dbReference>
<dbReference type="STRING" id="10090.ENSMUSP00000097667"/>
<dbReference type="GlyCosmos" id="Q9JJ72">
    <property type="glycosylation" value="2 sites, No reported glycans"/>
</dbReference>
<dbReference type="GlyGen" id="Q9JJ72">
    <property type="glycosylation" value="2 sites"/>
</dbReference>
<dbReference type="iPTMnet" id="Q9JJ72"/>
<dbReference type="PhosphoSitePlus" id="Q9JJ72"/>
<dbReference type="PaxDb" id="10090-ENSMUSP00000097667"/>
<dbReference type="ProteomicsDB" id="299950"/>
<dbReference type="Antibodypedia" id="54148">
    <property type="antibodies" value="75 antibodies from 15 providers"/>
</dbReference>
<dbReference type="DNASU" id="67874"/>
<dbReference type="Ensembl" id="ENSMUST00000100089.3">
    <property type="protein sequence ID" value="ENSMUSP00000097667.3"/>
    <property type="gene ID" value="ENSMUSG00000075334.3"/>
</dbReference>
<dbReference type="GeneID" id="67874"/>
<dbReference type="KEGG" id="mmu:67874"/>
<dbReference type="UCSC" id="uc008jrp.1">
    <property type="organism name" value="mouse"/>
</dbReference>
<dbReference type="AGR" id="MGI:1915124"/>
<dbReference type="CTD" id="56475"/>
<dbReference type="MGI" id="MGI:1915124">
    <property type="gene designation" value="Rprm"/>
</dbReference>
<dbReference type="VEuPathDB" id="HostDB:ENSMUSG00000075334"/>
<dbReference type="eggNOG" id="ENOG502S262">
    <property type="taxonomic scope" value="Eukaryota"/>
</dbReference>
<dbReference type="GeneTree" id="ENSGT00390000010523"/>
<dbReference type="HOGENOM" id="CLU_170456_0_0_1"/>
<dbReference type="InParanoid" id="Q9JJ72"/>
<dbReference type="OMA" id="LKCCNFS"/>
<dbReference type="OrthoDB" id="8570856at2759"/>
<dbReference type="PhylomeDB" id="Q9JJ72"/>
<dbReference type="TreeFam" id="TF332720"/>
<dbReference type="BioGRID-ORCS" id="67874">
    <property type="hits" value="1 hit in 76 CRISPR screens"/>
</dbReference>
<dbReference type="ChiTaRS" id="Rprm">
    <property type="organism name" value="mouse"/>
</dbReference>
<dbReference type="PRO" id="PR:Q9JJ72"/>
<dbReference type="Proteomes" id="UP000000589">
    <property type="component" value="Chromosome 2"/>
</dbReference>
<dbReference type="RNAct" id="Q9JJ72">
    <property type="molecule type" value="protein"/>
</dbReference>
<dbReference type="Bgee" id="ENSMUSG00000075334">
    <property type="expression patterns" value="Expressed in piriform cortex and 173 other cell types or tissues"/>
</dbReference>
<dbReference type="GO" id="GO:0005737">
    <property type="term" value="C:cytoplasm"/>
    <property type="evidence" value="ECO:0000314"/>
    <property type="project" value="MGI"/>
</dbReference>
<dbReference type="GO" id="GO:0016020">
    <property type="term" value="C:membrane"/>
    <property type="evidence" value="ECO:0007669"/>
    <property type="project" value="UniProtKB-SubCell"/>
</dbReference>
<dbReference type="GO" id="GO:0051726">
    <property type="term" value="P:regulation of cell cycle"/>
    <property type="evidence" value="ECO:0000314"/>
    <property type="project" value="MGI"/>
</dbReference>
<dbReference type="GO" id="GO:0007346">
    <property type="term" value="P:regulation of mitotic cell cycle"/>
    <property type="evidence" value="ECO:0000314"/>
    <property type="project" value="MGI"/>
</dbReference>
<dbReference type="InterPro" id="IPR043383">
    <property type="entry name" value="Reprimo_fam"/>
</dbReference>
<dbReference type="PANTHER" id="PTHR28649:SF2">
    <property type="entry name" value="PROTEIN REPRIMO"/>
    <property type="match status" value="1"/>
</dbReference>
<dbReference type="PANTHER" id="PTHR28649">
    <property type="entry name" value="PROTEIN REPRIMO-RELATED"/>
    <property type="match status" value="1"/>
</dbReference>
<name>RPRM_MOUSE</name>
<keyword id="KW-0963">Cytoplasm</keyword>
<keyword id="KW-0325">Glycoprotein</keyword>
<keyword id="KW-0472">Membrane</keyword>
<keyword id="KW-0597">Phosphoprotein</keyword>
<keyword id="KW-1185">Reference proteome</keyword>
<keyword id="KW-0812">Transmembrane</keyword>
<keyword id="KW-1133">Transmembrane helix</keyword>